<organism>
    <name type="scientific">Pseudescherichia vulneris</name>
    <name type="common">Escherichia vulneris</name>
    <dbReference type="NCBI Taxonomy" id="566"/>
    <lineage>
        <taxon>Bacteria</taxon>
        <taxon>Pseudomonadati</taxon>
        <taxon>Pseudomonadota</taxon>
        <taxon>Gammaproteobacteria</taxon>
        <taxon>Enterobacterales</taxon>
        <taxon>Enterobacteriaceae</taxon>
        <taxon>Pseudescherichia</taxon>
    </lineage>
</organism>
<reference key="1">
    <citation type="journal article" date="1997" name="Biochem. Mol. Biol. Int.">
        <title>Molecular cloning and nucleotide sequencing of bioF (7-keto-8-amino pelargonic acid synthetase), bioC and bioD (dethiobiotin synthetase) genes of Erwinia herbicola.</title>
        <authorList>
            <person name="Wu C.H."/>
            <person name="Bao Y.Y."/>
            <person name="Shao C.P."/>
            <person name="Shiuan D."/>
        </authorList>
    </citation>
    <scope>NUCLEOTIDE SEQUENCE [GENOMIC DNA]</scope>
    <source>
        <strain>ATCC 39368 / Eho10</strain>
    </source>
</reference>
<proteinExistence type="inferred from homology"/>
<gene>
    <name evidence="1" type="primary">bioD</name>
</gene>
<keyword id="KW-0067">ATP-binding</keyword>
<keyword id="KW-0093">Biotin biosynthesis</keyword>
<keyword id="KW-0963">Cytoplasm</keyword>
<keyword id="KW-0436">Ligase</keyword>
<keyword id="KW-0460">Magnesium</keyword>
<keyword id="KW-0479">Metal-binding</keyword>
<keyword id="KW-0547">Nucleotide-binding</keyword>
<accession>O06899</accession>
<sequence>MTERYFVTGTDTEVGKTVASCALLQAAAQAGWQTAGYKPVASGSEMTPEGLRNSDALALQHNSTLALRYEAVNPYTFAEPTSPHIVSAALGQPIEAETLSAGLRMLEAQAEWVLVEGAGGWFTPLSETLTFADWATQEQLPVILVVGVKLGCINHAVLTAQAVQQAGLRLAGWVANDVVPPGQRHTEYLATLKRMLPAPFLGEIPWLENVAPESDIGHWLDLSALGSASSTGKAADRPAV</sequence>
<feature type="chain" id="PRO_0000187965" description="ATP-dependent dethiobiotin synthetase BioD">
    <location>
        <begin position="1"/>
        <end position="240"/>
    </location>
</feature>
<feature type="active site" evidence="1">
    <location>
        <position position="38"/>
    </location>
</feature>
<feature type="binding site" evidence="1">
    <location>
        <begin position="13"/>
        <end position="18"/>
    </location>
    <ligand>
        <name>ATP</name>
        <dbReference type="ChEBI" id="CHEBI:30616"/>
    </ligand>
</feature>
<feature type="binding site" evidence="1">
    <location>
        <position position="17"/>
    </location>
    <ligand>
        <name>Mg(2+)</name>
        <dbReference type="ChEBI" id="CHEBI:18420"/>
    </ligand>
</feature>
<feature type="binding site" evidence="1">
    <location>
        <position position="42"/>
    </location>
    <ligand>
        <name>substrate</name>
    </ligand>
</feature>
<feature type="binding site" evidence="1">
    <location>
        <position position="55"/>
    </location>
    <ligand>
        <name>ATP</name>
        <dbReference type="ChEBI" id="CHEBI:30616"/>
    </ligand>
</feature>
<feature type="binding site" evidence="1">
    <location>
        <position position="55"/>
    </location>
    <ligand>
        <name>Mg(2+)</name>
        <dbReference type="ChEBI" id="CHEBI:18420"/>
    </ligand>
</feature>
<feature type="binding site" evidence="1">
    <location>
        <begin position="116"/>
        <end position="119"/>
    </location>
    <ligand>
        <name>ATP</name>
        <dbReference type="ChEBI" id="CHEBI:30616"/>
    </ligand>
</feature>
<feature type="binding site" evidence="1">
    <location>
        <position position="116"/>
    </location>
    <ligand>
        <name>Mg(2+)</name>
        <dbReference type="ChEBI" id="CHEBI:18420"/>
    </ligand>
</feature>
<feature type="binding site" evidence="1">
    <location>
        <begin position="176"/>
        <end position="177"/>
    </location>
    <ligand>
        <name>ATP</name>
        <dbReference type="ChEBI" id="CHEBI:30616"/>
    </ligand>
</feature>
<feature type="binding site" evidence="1">
    <location>
        <begin position="205"/>
        <end position="207"/>
    </location>
    <ligand>
        <name>ATP</name>
        <dbReference type="ChEBI" id="CHEBI:30616"/>
    </ligand>
</feature>
<dbReference type="EC" id="6.3.3.3" evidence="1"/>
<dbReference type="EMBL" id="U51208">
    <property type="protein sequence ID" value="AAB52912.1"/>
    <property type="molecule type" value="Genomic_DNA"/>
</dbReference>
<dbReference type="SMR" id="O06899"/>
<dbReference type="UniPathway" id="UPA00078">
    <property type="reaction ID" value="UER00161"/>
</dbReference>
<dbReference type="GO" id="GO:0005829">
    <property type="term" value="C:cytosol"/>
    <property type="evidence" value="ECO:0007669"/>
    <property type="project" value="TreeGrafter"/>
</dbReference>
<dbReference type="GO" id="GO:0005524">
    <property type="term" value="F:ATP binding"/>
    <property type="evidence" value="ECO:0007669"/>
    <property type="project" value="UniProtKB-UniRule"/>
</dbReference>
<dbReference type="GO" id="GO:0004141">
    <property type="term" value="F:dethiobiotin synthase activity"/>
    <property type="evidence" value="ECO:0007669"/>
    <property type="project" value="UniProtKB-UniRule"/>
</dbReference>
<dbReference type="GO" id="GO:0000287">
    <property type="term" value="F:magnesium ion binding"/>
    <property type="evidence" value="ECO:0007669"/>
    <property type="project" value="UniProtKB-UniRule"/>
</dbReference>
<dbReference type="GO" id="GO:0009102">
    <property type="term" value="P:biotin biosynthetic process"/>
    <property type="evidence" value="ECO:0007669"/>
    <property type="project" value="UniProtKB-UniRule"/>
</dbReference>
<dbReference type="CDD" id="cd03109">
    <property type="entry name" value="DTBS"/>
    <property type="match status" value="1"/>
</dbReference>
<dbReference type="FunFam" id="3.40.50.300:FF:000292">
    <property type="entry name" value="ATP-dependent dethiobiotin synthetase BioD"/>
    <property type="match status" value="1"/>
</dbReference>
<dbReference type="Gene3D" id="3.40.50.300">
    <property type="entry name" value="P-loop containing nucleotide triphosphate hydrolases"/>
    <property type="match status" value="1"/>
</dbReference>
<dbReference type="HAMAP" id="MF_00336">
    <property type="entry name" value="BioD"/>
    <property type="match status" value="1"/>
</dbReference>
<dbReference type="InterPro" id="IPR004472">
    <property type="entry name" value="DTB_synth_BioD"/>
</dbReference>
<dbReference type="InterPro" id="IPR027417">
    <property type="entry name" value="P-loop_NTPase"/>
</dbReference>
<dbReference type="NCBIfam" id="TIGR00347">
    <property type="entry name" value="bioD"/>
    <property type="match status" value="1"/>
</dbReference>
<dbReference type="PANTHER" id="PTHR43210">
    <property type="entry name" value="DETHIOBIOTIN SYNTHETASE"/>
    <property type="match status" value="1"/>
</dbReference>
<dbReference type="PANTHER" id="PTHR43210:SF5">
    <property type="entry name" value="DETHIOBIOTIN SYNTHETASE"/>
    <property type="match status" value="1"/>
</dbReference>
<dbReference type="Pfam" id="PF13500">
    <property type="entry name" value="AAA_26"/>
    <property type="match status" value="1"/>
</dbReference>
<dbReference type="PIRSF" id="PIRSF006755">
    <property type="entry name" value="DTB_synth"/>
    <property type="match status" value="1"/>
</dbReference>
<dbReference type="SUPFAM" id="SSF52540">
    <property type="entry name" value="P-loop containing nucleoside triphosphate hydrolases"/>
    <property type="match status" value="1"/>
</dbReference>
<name>BIOD_PSEVU</name>
<protein>
    <recommendedName>
        <fullName evidence="1">ATP-dependent dethiobiotin synthetase BioD</fullName>
        <ecNumber evidence="1">6.3.3.3</ecNumber>
    </recommendedName>
    <alternativeName>
        <fullName evidence="1">DTB synthetase</fullName>
        <shortName evidence="1">DTBS</shortName>
    </alternativeName>
    <alternativeName>
        <fullName evidence="1">Dethiobiotin synthase</fullName>
    </alternativeName>
</protein>
<evidence type="ECO:0000255" key="1">
    <source>
        <dbReference type="HAMAP-Rule" id="MF_00336"/>
    </source>
</evidence>
<comment type="function">
    <text evidence="1">Catalyzes a mechanistically unusual reaction, the ATP-dependent insertion of CO2 between the N7 and N8 nitrogen atoms of 7,8-diaminopelargonic acid (DAPA, also called 7,8-diammoniononanoate) to form a ureido ring.</text>
</comment>
<comment type="catalytic activity">
    <reaction evidence="1">
        <text>(7R,8S)-7,8-diammoniononanoate + CO2 + ATP = (4R,5S)-dethiobiotin + ADP + phosphate + 3 H(+)</text>
        <dbReference type="Rhea" id="RHEA:15805"/>
        <dbReference type="ChEBI" id="CHEBI:15378"/>
        <dbReference type="ChEBI" id="CHEBI:16526"/>
        <dbReference type="ChEBI" id="CHEBI:30616"/>
        <dbReference type="ChEBI" id="CHEBI:43474"/>
        <dbReference type="ChEBI" id="CHEBI:149469"/>
        <dbReference type="ChEBI" id="CHEBI:149473"/>
        <dbReference type="ChEBI" id="CHEBI:456216"/>
        <dbReference type="EC" id="6.3.3.3"/>
    </reaction>
</comment>
<comment type="cofactor">
    <cofactor evidence="1">
        <name>Mg(2+)</name>
        <dbReference type="ChEBI" id="CHEBI:18420"/>
    </cofactor>
</comment>
<comment type="pathway">
    <text evidence="1">Cofactor biosynthesis; biotin biosynthesis; biotin from 7,8-diaminononanoate: step 1/2.</text>
</comment>
<comment type="subunit">
    <text evidence="1">Homodimer.</text>
</comment>
<comment type="subcellular location">
    <subcellularLocation>
        <location evidence="1">Cytoplasm</location>
    </subcellularLocation>
</comment>
<comment type="similarity">
    <text evidence="1">Belongs to the dethiobiotin synthetase family.</text>
</comment>